<keyword id="KW-0012">Acyltransferase</keyword>
<keyword id="KW-0963">Cytoplasm</keyword>
<keyword id="KW-0808">Transferase</keyword>
<sequence length="271" mass="31947">MKSYHPKSLLNDLQYYITPPHDCSYLENKSARMVFLDPIHRIDVVTLSELSRLGFRRSGDFVYRPECHLCRQCLSCRVPVADFQMNSMQKKAWKRNQDLTMTVLPTRQASQIHYDLYERYINERHADGDMFPPSLDQFEKFLVHSCTDSFFLELWKDNRLISVSTCDLMDDGLSAVYTFFDPDEHRRSLGVYSILNQIEYVKTLGLEYVYLGYWVPHSAKMNYKSQYTPLELLLDGQWRRLNRSLSPEEINQLGNSLMTTLPSEWNNLIIK</sequence>
<reference key="1">
    <citation type="journal article" date="2008" name="Antimicrob. Agents Chemother.">
        <title>Whole-genome pyrosequencing of an epidemic multidrug-resistant Acinetobacter baumannii strain belonging to the European clone II group.</title>
        <authorList>
            <person name="Iacono M."/>
            <person name="Villa L."/>
            <person name="Fortini D."/>
            <person name="Bordoni R."/>
            <person name="Imperi F."/>
            <person name="Bonnal R.J."/>
            <person name="Sicheritz-Ponten T."/>
            <person name="De Bellis G."/>
            <person name="Visca P."/>
            <person name="Cassone A."/>
            <person name="Carattoli A."/>
        </authorList>
    </citation>
    <scope>NUCLEOTIDE SEQUENCE [LARGE SCALE GENOMIC DNA]</scope>
    <source>
        <strain>ACICU</strain>
    </source>
</reference>
<feature type="chain" id="PRO_1000131964" description="Aspartate/glutamate leucyltransferase">
    <location>
        <begin position="1"/>
        <end position="271"/>
    </location>
</feature>
<evidence type="ECO:0000255" key="1">
    <source>
        <dbReference type="HAMAP-Rule" id="MF_00689"/>
    </source>
</evidence>
<dbReference type="EC" id="2.3.2.29" evidence="1"/>
<dbReference type="EMBL" id="CP000863">
    <property type="protein sequence ID" value="ACC56134.1"/>
    <property type="molecule type" value="Genomic_DNA"/>
</dbReference>
<dbReference type="RefSeq" id="WP_000844343.1">
    <property type="nucleotide sequence ID" value="NZ_CP031380.1"/>
</dbReference>
<dbReference type="SMR" id="B2HUQ9"/>
<dbReference type="KEGG" id="abc:ACICU_00822"/>
<dbReference type="HOGENOM" id="CLU_077607_0_0_6"/>
<dbReference type="Proteomes" id="UP000008839">
    <property type="component" value="Chromosome"/>
</dbReference>
<dbReference type="GO" id="GO:0005737">
    <property type="term" value="C:cytoplasm"/>
    <property type="evidence" value="ECO:0007669"/>
    <property type="project" value="UniProtKB-SubCell"/>
</dbReference>
<dbReference type="GO" id="GO:0004057">
    <property type="term" value="F:arginyl-tRNA--protein transferase activity"/>
    <property type="evidence" value="ECO:0007669"/>
    <property type="project" value="InterPro"/>
</dbReference>
<dbReference type="GO" id="GO:0008914">
    <property type="term" value="F:leucyl-tRNA--protein transferase activity"/>
    <property type="evidence" value="ECO:0007669"/>
    <property type="project" value="UniProtKB-UniRule"/>
</dbReference>
<dbReference type="GO" id="GO:0071596">
    <property type="term" value="P:ubiquitin-dependent protein catabolic process via the N-end rule pathway"/>
    <property type="evidence" value="ECO:0007669"/>
    <property type="project" value="InterPro"/>
</dbReference>
<dbReference type="HAMAP" id="MF_00689">
    <property type="entry name" value="Bpt"/>
    <property type="match status" value="1"/>
</dbReference>
<dbReference type="InterPro" id="IPR016181">
    <property type="entry name" value="Acyl_CoA_acyltransferase"/>
</dbReference>
<dbReference type="InterPro" id="IPR017138">
    <property type="entry name" value="Asp_Glu_LeuTrfase"/>
</dbReference>
<dbReference type="InterPro" id="IPR030700">
    <property type="entry name" value="N-end_Aminoacyl_Trfase"/>
</dbReference>
<dbReference type="InterPro" id="IPR007472">
    <property type="entry name" value="N-end_Aminoacyl_Trfase_C"/>
</dbReference>
<dbReference type="InterPro" id="IPR007471">
    <property type="entry name" value="N-end_Aminoacyl_Trfase_N"/>
</dbReference>
<dbReference type="NCBIfam" id="NF002341">
    <property type="entry name" value="PRK01305.1-1"/>
    <property type="match status" value="1"/>
</dbReference>
<dbReference type="NCBIfam" id="NF002342">
    <property type="entry name" value="PRK01305.1-3"/>
    <property type="match status" value="1"/>
</dbReference>
<dbReference type="NCBIfam" id="NF002346">
    <property type="entry name" value="PRK01305.2-3"/>
    <property type="match status" value="1"/>
</dbReference>
<dbReference type="PANTHER" id="PTHR21367">
    <property type="entry name" value="ARGININE-TRNA-PROTEIN TRANSFERASE 1"/>
    <property type="match status" value="1"/>
</dbReference>
<dbReference type="PANTHER" id="PTHR21367:SF1">
    <property type="entry name" value="ARGINYL-TRNA--PROTEIN TRANSFERASE 1"/>
    <property type="match status" value="1"/>
</dbReference>
<dbReference type="Pfam" id="PF04377">
    <property type="entry name" value="ATE_C"/>
    <property type="match status" value="1"/>
</dbReference>
<dbReference type="Pfam" id="PF04376">
    <property type="entry name" value="ATE_N"/>
    <property type="match status" value="1"/>
</dbReference>
<dbReference type="PIRSF" id="PIRSF037208">
    <property type="entry name" value="ATE_pro_prd"/>
    <property type="match status" value="1"/>
</dbReference>
<dbReference type="SUPFAM" id="SSF55729">
    <property type="entry name" value="Acyl-CoA N-acyltransferases (Nat)"/>
    <property type="match status" value="1"/>
</dbReference>
<name>BPT_ACIBC</name>
<comment type="function">
    <text evidence="1">Functions in the N-end rule pathway of protein degradation where it conjugates Leu from its aminoacyl-tRNA to the N-termini of proteins containing an N-terminal aspartate or glutamate.</text>
</comment>
<comment type="catalytic activity">
    <reaction evidence="1">
        <text>N-terminal L-glutamyl-[protein] + L-leucyl-tRNA(Leu) = N-terminal L-leucyl-L-glutamyl-[protein] + tRNA(Leu) + H(+)</text>
        <dbReference type="Rhea" id="RHEA:50412"/>
        <dbReference type="Rhea" id="RHEA-COMP:9613"/>
        <dbReference type="Rhea" id="RHEA-COMP:9622"/>
        <dbReference type="Rhea" id="RHEA-COMP:12664"/>
        <dbReference type="Rhea" id="RHEA-COMP:12668"/>
        <dbReference type="ChEBI" id="CHEBI:15378"/>
        <dbReference type="ChEBI" id="CHEBI:64721"/>
        <dbReference type="ChEBI" id="CHEBI:78442"/>
        <dbReference type="ChEBI" id="CHEBI:78494"/>
        <dbReference type="ChEBI" id="CHEBI:133041"/>
        <dbReference type="EC" id="2.3.2.29"/>
    </reaction>
</comment>
<comment type="catalytic activity">
    <reaction evidence="1">
        <text>N-terminal L-aspartyl-[protein] + L-leucyl-tRNA(Leu) = N-terminal L-leucyl-L-aspartyl-[protein] + tRNA(Leu) + H(+)</text>
        <dbReference type="Rhea" id="RHEA:50420"/>
        <dbReference type="Rhea" id="RHEA-COMP:9613"/>
        <dbReference type="Rhea" id="RHEA-COMP:9622"/>
        <dbReference type="Rhea" id="RHEA-COMP:12669"/>
        <dbReference type="Rhea" id="RHEA-COMP:12674"/>
        <dbReference type="ChEBI" id="CHEBI:15378"/>
        <dbReference type="ChEBI" id="CHEBI:64720"/>
        <dbReference type="ChEBI" id="CHEBI:78442"/>
        <dbReference type="ChEBI" id="CHEBI:78494"/>
        <dbReference type="ChEBI" id="CHEBI:133042"/>
        <dbReference type="EC" id="2.3.2.29"/>
    </reaction>
</comment>
<comment type="subcellular location">
    <subcellularLocation>
        <location evidence="1">Cytoplasm</location>
    </subcellularLocation>
</comment>
<comment type="similarity">
    <text evidence="1">Belongs to the R-transferase family. Bpt subfamily.</text>
</comment>
<protein>
    <recommendedName>
        <fullName evidence="1">Aspartate/glutamate leucyltransferase</fullName>
        <ecNumber evidence="1">2.3.2.29</ecNumber>
    </recommendedName>
</protein>
<organism>
    <name type="scientific">Acinetobacter baumannii (strain ACICU)</name>
    <dbReference type="NCBI Taxonomy" id="405416"/>
    <lineage>
        <taxon>Bacteria</taxon>
        <taxon>Pseudomonadati</taxon>
        <taxon>Pseudomonadota</taxon>
        <taxon>Gammaproteobacteria</taxon>
        <taxon>Moraxellales</taxon>
        <taxon>Moraxellaceae</taxon>
        <taxon>Acinetobacter</taxon>
        <taxon>Acinetobacter calcoaceticus/baumannii complex</taxon>
    </lineage>
</organism>
<accession>B2HUQ9</accession>
<proteinExistence type="inferred from homology"/>
<gene>
    <name evidence="1" type="primary">bpt</name>
    <name type="ordered locus">ACICU_00822</name>
</gene>